<proteinExistence type="inferred from homology"/>
<comment type="function">
    <text evidence="1">Negatively regulates transcription of bacterial ribonucleotide reductase nrd genes and operons by binding to NrdR-boxes.</text>
</comment>
<comment type="cofactor">
    <cofactor evidence="1">
        <name>Zn(2+)</name>
        <dbReference type="ChEBI" id="CHEBI:29105"/>
    </cofactor>
    <text evidence="1">Binds 1 zinc ion.</text>
</comment>
<comment type="similarity">
    <text evidence="1">Belongs to the NrdR family.</text>
</comment>
<evidence type="ECO:0000255" key="1">
    <source>
        <dbReference type="HAMAP-Rule" id="MF_00440"/>
    </source>
</evidence>
<reference key="1">
    <citation type="journal article" date="2008" name="Environ. Microbiol.">
        <title>The genome of Erwinia tasmaniensis strain Et1/99, a non-pathogenic bacterium in the genus Erwinia.</title>
        <authorList>
            <person name="Kube M."/>
            <person name="Migdoll A.M."/>
            <person name="Mueller I."/>
            <person name="Kuhl H."/>
            <person name="Beck A."/>
            <person name="Reinhardt R."/>
            <person name="Geider K."/>
        </authorList>
    </citation>
    <scope>NUCLEOTIDE SEQUENCE [LARGE SCALE GENOMIC DNA]</scope>
    <source>
        <strain>DSM 17950 / CFBP 7177 / CIP 109463 / NCPPB 4357 / Et1/99</strain>
    </source>
</reference>
<dbReference type="EMBL" id="CU468135">
    <property type="protein sequence ID" value="CAO97579.1"/>
    <property type="molecule type" value="Genomic_DNA"/>
</dbReference>
<dbReference type="RefSeq" id="WP_012442244.1">
    <property type="nucleotide sequence ID" value="NC_010694.1"/>
</dbReference>
<dbReference type="SMR" id="B2VHT2"/>
<dbReference type="STRING" id="465817.ETA_25330"/>
<dbReference type="KEGG" id="eta:ETA_25330"/>
<dbReference type="eggNOG" id="COG1327">
    <property type="taxonomic scope" value="Bacteria"/>
</dbReference>
<dbReference type="HOGENOM" id="CLU_108412_0_0_6"/>
<dbReference type="OrthoDB" id="9807461at2"/>
<dbReference type="Proteomes" id="UP000001726">
    <property type="component" value="Chromosome"/>
</dbReference>
<dbReference type="GO" id="GO:0005524">
    <property type="term" value="F:ATP binding"/>
    <property type="evidence" value="ECO:0007669"/>
    <property type="project" value="UniProtKB-KW"/>
</dbReference>
<dbReference type="GO" id="GO:0003677">
    <property type="term" value="F:DNA binding"/>
    <property type="evidence" value="ECO:0007669"/>
    <property type="project" value="UniProtKB-KW"/>
</dbReference>
<dbReference type="GO" id="GO:0008270">
    <property type="term" value="F:zinc ion binding"/>
    <property type="evidence" value="ECO:0007669"/>
    <property type="project" value="UniProtKB-UniRule"/>
</dbReference>
<dbReference type="GO" id="GO:0045892">
    <property type="term" value="P:negative regulation of DNA-templated transcription"/>
    <property type="evidence" value="ECO:0007669"/>
    <property type="project" value="UniProtKB-UniRule"/>
</dbReference>
<dbReference type="HAMAP" id="MF_00440">
    <property type="entry name" value="NrdR"/>
    <property type="match status" value="1"/>
</dbReference>
<dbReference type="InterPro" id="IPR005144">
    <property type="entry name" value="ATP-cone_dom"/>
</dbReference>
<dbReference type="InterPro" id="IPR055173">
    <property type="entry name" value="NrdR-like_N"/>
</dbReference>
<dbReference type="InterPro" id="IPR003796">
    <property type="entry name" value="RNR_NrdR-like"/>
</dbReference>
<dbReference type="NCBIfam" id="TIGR00244">
    <property type="entry name" value="transcriptional regulator NrdR"/>
    <property type="match status" value="1"/>
</dbReference>
<dbReference type="PANTHER" id="PTHR30455">
    <property type="entry name" value="TRANSCRIPTIONAL REPRESSOR NRDR"/>
    <property type="match status" value="1"/>
</dbReference>
<dbReference type="PANTHER" id="PTHR30455:SF2">
    <property type="entry name" value="TRANSCRIPTIONAL REPRESSOR NRDR"/>
    <property type="match status" value="1"/>
</dbReference>
<dbReference type="Pfam" id="PF03477">
    <property type="entry name" value="ATP-cone"/>
    <property type="match status" value="1"/>
</dbReference>
<dbReference type="Pfam" id="PF22811">
    <property type="entry name" value="Zn_ribbon_NrdR"/>
    <property type="match status" value="1"/>
</dbReference>
<dbReference type="PROSITE" id="PS51161">
    <property type="entry name" value="ATP_CONE"/>
    <property type="match status" value="1"/>
</dbReference>
<feature type="chain" id="PRO_1000124506" description="Transcriptional repressor NrdR">
    <location>
        <begin position="1"/>
        <end position="149"/>
    </location>
</feature>
<feature type="domain" description="ATP-cone" evidence="1">
    <location>
        <begin position="49"/>
        <end position="139"/>
    </location>
</feature>
<feature type="zinc finger region" evidence="1">
    <location>
        <begin position="3"/>
        <end position="34"/>
    </location>
</feature>
<organism>
    <name type="scientific">Erwinia tasmaniensis (strain DSM 17950 / CFBP 7177 / CIP 109463 / NCPPB 4357 / Et1/99)</name>
    <dbReference type="NCBI Taxonomy" id="465817"/>
    <lineage>
        <taxon>Bacteria</taxon>
        <taxon>Pseudomonadati</taxon>
        <taxon>Pseudomonadota</taxon>
        <taxon>Gammaproteobacteria</taxon>
        <taxon>Enterobacterales</taxon>
        <taxon>Erwiniaceae</taxon>
        <taxon>Erwinia</taxon>
    </lineage>
</organism>
<accession>B2VHT2</accession>
<keyword id="KW-0067">ATP-binding</keyword>
<keyword id="KW-0238">DNA-binding</keyword>
<keyword id="KW-0479">Metal-binding</keyword>
<keyword id="KW-0547">Nucleotide-binding</keyword>
<keyword id="KW-1185">Reference proteome</keyword>
<keyword id="KW-0678">Repressor</keyword>
<keyword id="KW-0804">Transcription</keyword>
<keyword id="KW-0805">Transcription regulation</keyword>
<keyword id="KW-0862">Zinc</keyword>
<keyword id="KW-0863">Zinc-finger</keyword>
<protein>
    <recommendedName>
        <fullName evidence="1">Transcriptional repressor NrdR</fullName>
    </recommendedName>
</protein>
<sequence>MHCPFCCAVDTKVIDSRLVGEGSSVRRRRQCVVCHERFTTFEVAELVMPRVVKSNDVREPFNEDKLRSGLMKALEKRPVSSDAVENAISHIKSKLRATGEREVASKSIGSLVMDELKKLDKVAYIRFASVYRSFEDIREFGEEIARLQD</sequence>
<name>NRDR_ERWT9</name>
<gene>
    <name evidence="1" type="primary">nrdR</name>
    <name type="ordered locus">ETA_25330</name>
</gene>